<proteinExistence type="inferred from homology"/>
<name>FGD_TSUPD</name>
<sequence>MAKLQLGYKASAEQFGPRELVEIAVAAEAAGMDSVAVSDHFQPWRVNGGHAPFSLAWMAAVGERTERVKIGTSVMTPTFRYNPAVIAQAFASMACMYPDRIFLGVGSGEALNEYATGFQGEWPEFKERFARLRESVRLMRELWSGEISNFDGDYYHTKDAVLFDIPERPVPVYIAAGGPVVAKYAGRAGDGMICTSGKGMDLYTEKLIPAAKEGAELGGRDFDALDKMIEIKISYDPDPELALENTRFWAPLSLTAEQKHSVNSSAEMERLADELPIEQVAKRWIVASDPDEAVAAVKQYTDAGLNHLVFHAPGHDQRRFLDNFQRDLEPRLRALG</sequence>
<accession>D5UYN8</accession>
<evidence type="ECO:0000255" key="1">
    <source>
        <dbReference type="HAMAP-Rule" id="MF_02123"/>
    </source>
</evidence>
<reference key="1">
    <citation type="journal article" date="2011" name="Stand. Genomic Sci.">
        <title>Complete genome sequence of Tsukamurella paurometabola type strain (no. 33).</title>
        <authorList>
            <person name="Munk A.C."/>
            <person name="Lapidus A."/>
            <person name="Lucas S."/>
            <person name="Nolan M."/>
            <person name="Tice H."/>
            <person name="Cheng J.F."/>
            <person name="Del Rio T.G."/>
            <person name="Goodwin L."/>
            <person name="Pitluck S."/>
            <person name="Liolios K."/>
            <person name="Huntemann M."/>
            <person name="Ivanova N."/>
            <person name="Mavromatis K."/>
            <person name="Mikhailova N."/>
            <person name="Pati A."/>
            <person name="Chen A."/>
            <person name="Palaniappan K."/>
            <person name="Tapia R."/>
            <person name="Han C."/>
            <person name="Land M."/>
            <person name="Hauser L."/>
            <person name="Chang Y.J."/>
            <person name="Jeffries C.D."/>
            <person name="Brettin T."/>
            <person name="Yasawong M."/>
            <person name="Brambilla E.M."/>
            <person name="Rohde M."/>
            <person name="Sikorski J."/>
            <person name="Goeker M."/>
            <person name="Detter J.C."/>
            <person name="Woyke T."/>
            <person name="Bristow J."/>
            <person name="Eisen J.A."/>
            <person name="Markowitz V."/>
            <person name="Hugenholtz P."/>
            <person name="Kyrpides N.C."/>
            <person name="Klenk H.P."/>
        </authorList>
    </citation>
    <scope>NUCLEOTIDE SEQUENCE [LARGE SCALE GENOMIC DNA]</scope>
    <source>
        <strain>ATCC 8368 / DSM 20162 / CCUG 35730 / CIP 100753 / JCM 10117 / KCTC 9821 / NBRC 16120 / NCIMB 702349 / NCTC 13040</strain>
    </source>
</reference>
<organism>
    <name type="scientific">Tsukamurella paurometabola (strain ATCC 8368 / DSM 20162 / CCUG 35730 / CIP 100753 / JCM 10117 / KCTC 9821 / NBRC 16120 / NCIMB 702349 / NCTC 13040)</name>
    <name type="common">Corynebacterium paurometabolum</name>
    <dbReference type="NCBI Taxonomy" id="521096"/>
    <lineage>
        <taxon>Bacteria</taxon>
        <taxon>Bacillati</taxon>
        <taxon>Actinomycetota</taxon>
        <taxon>Actinomycetes</taxon>
        <taxon>Mycobacteriales</taxon>
        <taxon>Tsukamurellaceae</taxon>
        <taxon>Tsukamurella</taxon>
    </lineage>
</organism>
<dbReference type="EC" id="1.1.98.2" evidence="1"/>
<dbReference type="EMBL" id="CP001966">
    <property type="protein sequence ID" value="ADG80341.1"/>
    <property type="molecule type" value="Genomic_DNA"/>
</dbReference>
<dbReference type="RefSeq" id="WP_013128337.1">
    <property type="nucleotide sequence ID" value="NC_014158.1"/>
</dbReference>
<dbReference type="SMR" id="D5UYN8"/>
<dbReference type="STRING" id="521096.Tpau_3763"/>
<dbReference type="KEGG" id="tpr:Tpau_3763"/>
<dbReference type="eggNOG" id="COG2141">
    <property type="taxonomic scope" value="Bacteria"/>
</dbReference>
<dbReference type="HOGENOM" id="CLU_027853_4_0_11"/>
<dbReference type="Proteomes" id="UP000001213">
    <property type="component" value="Chromosome"/>
</dbReference>
<dbReference type="GO" id="GO:0070967">
    <property type="term" value="F:coenzyme F420 binding"/>
    <property type="evidence" value="ECO:0007669"/>
    <property type="project" value="UniProtKB-UniRule"/>
</dbReference>
<dbReference type="GO" id="GO:0052749">
    <property type="term" value="F:glucose-6-phosphate dehydrogenase (coenzyme F420) activity"/>
    <property type="evidence" value="ECO:0007669"/>
    <property type="project" value="UniProtKB-EC"/>
</dbReference>
<dbReference type="GO" id="GO:0016705">
    <property type="term" value="F:oxidoreductase activity, acting on paired donors, with incorporation or reduction of molecular oxygen"/>
    <property type="evidence" value="ECO:0007669"/>
    <property type="project" value="InterPro"/>
</dbReference>
<dbReference type="GO" id="GO:0005975">
    <property type="term" value="P:carbohydrate metabolic process"/>
    <property type="evidence" value="ECO:0007669"/>
    <property type="project" value="UniProtKB-UniRule"/>
</dbReference>
<dbReference type="CDD" id="cd01097">
    <property type="entry name" value="Tetrahydromethanopterin_reductase"/>
    <property type="match status" value="1"/>
</dbReference>
<dbReference type="Gene3D" id="3.20.20.30">
    <property type="entry name" value="Luciferase-like domain"/>
    <property type="match status" value="1"/>
</dbReference>
<dbReference type="HAMAP" id="MF_02123">
    <property type="entry name" value="F420_G6P_DH"/>
    <property type="match status" value="1"/>
</dbReference>
<dbReference type="InterPro" id="IPR019944">
    <property type="entry name" value="F420-dep_G6P_DH"/>
</dbReference>
<dbReference type="InterPro" id="IPR050564">
    <property type="entry name" value="F420-G6PD/mer"/>
</dbReference>
<dbReference type="InterPro" id="IPR019945">
    <property type="entry name" value="F420_G6P_DH-rel"/>
</dbReference>
<dbReference type="InterPro" id="IPR011251">
    <property type="entry name" value="Luciferase-like_dom"/>
</dbReference>
<dbReference type="InterPro" id="IPR036661">
    <property type="entry name" value="Luciferase-like_sf"/>
</dbReference>
<dbReference type="NCBIfam" id="TIGR03554">
    <property type="entry name" value="F420_G6P_DH"/>
    <property type="match status" value="1"/>
</dbReference>
<dbReference type="NCBIfam" id="TIGR03557">
    <property type="entry name" value="F420_G6P_family"/>
    <property type="match status" value="1"/>
</dbReference>
<dbReference type="PANTHER" id="PTHR43244">
    <property type="match status" value="1"/>
</dbReference>
<dbReference type="PANTHER" id="PTHR43244:SF1">
    <property type="entry name" value="5,10-METHYLENETETRAHYDROMETHANOPTERIN REDUCTASE"/>
    <property type="match status" value="1"/>
</dbReference>
<dbReference type="Pfam" id="PF00296">
    <property type="entry name" value="Bac_luciferase"/>
    <property type="match status" value="1"/>
</dbReference>
<dbReference type="SUPFAM" id="SSF51679">
    <property type="entry name" value="Bacterial luciferase-like"/>
    <property type="match status" value="1"/>
</dbReference>
<comment type="function">
    <text evidence="1">Catalyzes the coenzyme F420-dependent oxidation of glucose 6-phosphate (G6P) to 6-phosphogluconolactone.</text>
</comment>
<comment type="catalytic activity">
    <reaction evidence="1">
        <text>oxidized coenzyme F420-(gamma-L-Glu)(n) + D-glucose 6-phosphate + H(+) = 6-phospho-D-glucono-1,5-lactone + reduced coenzyme F420-(gamma-L-Glu)(n)</text>
        <dbReference type="Rhea" id="RHEA:27294"/>
        <dbReference type="Rhea" id="RHEA-COMP:12939"/>
        <dbReference type="Rhea" id="RHEA-COMP:14378"/>
        <dbReference type="ChEBI" id="CHEBI:15378"/>
        <dbReference type="ChEBI" id="CHEBI:57955"/>
        <dbReference type="ChEBI" id="CHEBI:61548"/>
        <dbReference type="ChEBI" id="CHEBI:133980"/>
        <dbReference type="ChEBI" id="CHEBI:139511"/>
        <dbReference type="EC" id="1.1.98.2"/>
    </reaction>
</comment>
<comment type="subunit">
    <text evidence="1">Homodimer.</text>
</comment>
<comment type="similarity">
    <text evidence="1">Belongs to the F420-dependent glucose-6-phosphate dehydrogenase family.</text>
</comment>
<feature type="chain" id="PRO_0000413604" description="F420-dependent glucose-6-phosphate dehydrogenase">
    <location>
        <begin position="1"/>
        <end position="336"/>
    </location>
</feature>
<feature type="active site" description="Proton donor" evidence="1">
    <location>
        <position position="40"/>
    </location>
</feature>
<feature type="active site" description="Proton acceptor" evidence="1">
    <location>
        <position position="109"/>
    </location>
</feature>
<feature type="binding site" evidence="1">
    <location>
        <position position="39"/>
    </location>
    <ligand>
        <name>coenzyme F420-(gamma-Glu)n</name>
        <dbReference type="ChEBI" id="CHEBI:133980"/>
    </ligand>
</feature>
<feature type="binding site" evidence="1">
    <location>
        <position position="76"/>
    </location>
    <ligand>
        <name>coenzyme F420-(gamma-Glu)n</name>
        <dbReference type="ChEBI" id="CHEBI:133980"/>
    </ligand>
</feature>
<feature type="binding site" evidence="1">
    <location>
        <begin position="107"/>
        <end position="108"/>
    </location>
    <ligand>
        <name>coenzyme F420-(gamma-Glu)n</name>
        <dbReference type="ChEBI" id="CHEBI:133980"/>
    </ligand>
</feature>
<feature type="binding site" evidence="1">
    <location>
        <position position="112"/>
    </location>
    <ligand>
        <name>coenzyme F420-(gamma-Glu)n</name>
        <dbReference type="ChEBI" id="CHEBI:133980"/>
    </ligand>
</feature>
<feature type="binding site" evidence="1">
    <location>
        <begin position="177"/>
        <end position="178"/>
    </location>
    <ligand>
        <name>coenzyme F420-(gamma-Glu)n</name>
        <dbReference type="ChEBI" id="CHEBI:133980"/>
    </ligand>
</feature>
<feature type="binding site" evidence="1">
    <location>
        <begin position="180"/>
        <end position="181"/>
    </location>
    <ligand>
        <name>coenzyme F420-(gamma-Glu)n</name>
        <dbReference type="ChEBI" id="CHEBI:133980"/>
    </ligand>
</feature>
<feature type="binding site" evidence="1">
    <location>
        <position position="195"/>
    </location>
    <ligand>
        <name>substrate</name>
    </ligand>
</feature>
<feature type="binding site" evidence="1">
    <location>
        <position position="198"/>
    </location>
    <ligand>
        <name>substrate</name>
    </ligand>
</feature>
<feature type="binding site" evidence="1">
    <location>
        <position position="259"/>
    </location>
    <ligand>
        <name>substrate</name>
    </ligand>
</feature>
<feature type="binding site" evidence="1">
    <location>
        <position position="283"/>
    </location>
    <ligand>
        <name>substrate</name>
    </ligand>
</feature>
<protein>
    <recommendedName>
        <fullName evidence="1">F420-dependent glucose-6-phosphate dehydrogenase</fullName>
        <shortName evidence="1">FGD</shortName>
        <shortName evidence="1">G6PD</shortName>
        <ecNumber evidence="1">1.1.98.2</ecNumber>
    </recommendedName>
</protein>
<keyword id="KW-0119">Carbohydrate metabolism</keyword>
<keyword id="KW-0560">Oxidoreductase</keyword>
<keyword id="KW-1185">Reference proteome</keyword>
<gene>
    <name evidence="1" type="primary">fgd</name>
    <name type="ordered locus">Tpau_3763</name>
</gene>